<proteinExistence type="inferred from homology"/>
<name>FABH_PSEAB</name>
<organism>
    <name type="scientific">Pseudomonas aeruginosa (strain UCBPP-PA14)</name>
    <dbReference type="NCBI Taxonomy" id="208963"/>
    <lineage>
        <taxon>Bacteria</taxon>
        <taxon>Pseudomonadati</taxon>
        <taxon>Pseudomonadota</taxon>
        <taxon>Gammaproteobacteria</taxon>
        <taxon>Pseudomonadales</taxon>
        <taxon>Pseudomonadaceae</taxon>
        <taxon>Pseudomonas</taxon>
    </lineage>
</organism>
<keyword id="KW-0012">Acyltransferase</keyword>
<keyword id="KW-0963">Cytoplasm</keyword>
<keyword id="KW-0275">Fatty acid biosynthesis</keyword>
<keyword id="KW-0276">Fatty acid metabolism</keyword>
<keyword id="KW-0444">Lipid biosynthesis</keyword>
<keyword id="KW-0443">Lipid metabolism</keyword>
<keyword id="KW-0511">Multifunctional enzyme</keyword>
<keyword id="KW-0808">Transferase</keyword>
<dbReference type="EC" id="2.3.1.180" evidence="1"/>
<dbReference type="EMBL" id="CP000438">
    <property type="protein sequence ID" value="ABJ12584.1"/>
    <property type="molecule type" value="Genomic_DNA"/>
</dbReference>
<dbReference type="RefSeq" id="WP_003091712.1">
    <property type="nucleotide sequence ID" value="NZ_CP034244.1"/>
</dbReference>
<dbReference type="SMR" id="Q02QG7"/>
<dbReference type="KEGG" id="pau:PA14_20950"/>
<dbReference type="PseudoCAP" id="PA14_20950"/>
<dbReference type="HOGENOM" id="CLU_039592_4_0_6"/>
<dbReference type="BioCyc" id="PAER208963:G1G74-1729-MONOMER"/>
<dbReference type="UniPathway" id="UPA00094"/>
<dbReference type="Proteomes" id="UP000000653">
    <property type="component" value="Chromosome"/>
</dbReference>
<dbReference type="GO" id="GO:0005737">
    <property type="term" value="C:cytoplasm"/>
    <property type="evidence" value="ECO:0007669"/>
    <property type="project" value="UniProtKB-SubCell"/>
</dbReference>
<dbReference type="GO" id="GO:0004315">
    <property type="term" value="F:3-oxoacyl-[acyl-carrier-protein] synthase activity"/>
    <property type="evidence" value="ECO:0007669"/>
    <property type="project" value="InterPro"/>
</dbReference>
<dbReference type="GO" id="GO:0033818">
    <property type="term" value="F:beta-ketoacyl-acyl-carrier-protein synthase III activity"/>
    <property type="evidence" value="ECO:0007669"/>
    <property type="project" value="UniProtKB-UniRule"/>
</dbReference>
<dbReference type="GO" id="GO:0006633">
    <property type="term" value="P:fatty acid biosynthetic process"/>
    <property type="evidence" value="ECO:0007669"/>
    <property type="project" value="UniProtKB-UniRule"/>
</dbReference>
<dbReference type="GO" id="GO:0044550">
    <property type="term" value="P:secondary metabolite biosynthetic process"/>
    <property type="evidence" value="ECO:0007669"/>
    <property type="project" value="TreeGrafter"/>
</dbReference>
<dbReference type="CDD" id="cd00830">
    <property type="entry name" value="KAS_III"/>
    <property type="match status" value="1"/>
</dbReference>
<dbReference type="Gene3D" id="3.40.47.10">
    <property type="match status" value="1"/>
</dbReference>
<dbReference type="HAMAP" id="MF_01815">
    <property type="entry name" value="FabH"/>
    <property type="match status" value="1"/>
</dbReference>
<dbReference type="InterPro" id="IPR013747">
    <property type="entry name" value="ACP_syn_III_C"/>
</dbReference>
<dbReference type="InterPro" id="IPR013751">
    <property type="entry name" value="ACP_syn_III_N"/>
</dbReference>
<dbReference type="InterPro" id="IPR004655">
    <property type="entry name" value="FabH"/>
</dbReference>
<dbReference type="InterPro" id="IPR016039">
    <property type="entry name" value="Thiolase-like"/>
</dbReference>
<dbReference type="NCBIfam" id="TIGR00747">
    <property type="entry name" value="fabH"/>
    <property type="match status" value="1"/>
</dbReference>
<dbReference type="NCBIfam" id="NF006829">
    <property type="entry name" value="PRK09352.1"/>
    <property type="match status" value="1"/>
</dbReference>
<dbReference type="PANTHER" id="PTHR34069">
    <property type="entry name" value="3-OXOACYL-[ACYL-CARRIER-PROTEIN] SYNTHASE 3"/>
    <property type="match status" value="1"/>
</dbReference>
<dbReference type="PANTHER" id="PTHR34069:SF2">
    <property type="entry name" value="BETA-KETOACYL-[ACYL-CARRIER-PROTEIN] SYNTHASE III"/>
    <property type="match status" value="1"/>
</dbReference>
<dbReference type="Pfam" id="PF08545">
    <property type="entry name" value="ACP_syn_III"/>
    <property type="match status" value="1"/>
</dbReference>
<dbReference type="Pfam" id="PF08541">
    <property type="entry name" value="ACP_syn_III_C"/>
    <property type="match status" value="1"/>
</dbReference>
<dbReference type="SUPFAM" id="SSF53901">
    <property type="entry name" value="Thiolase-like"/>
    <property type="match status" value="1"/>
</dbReference>
<gene>
    <name evidence="1" type="primary">fabH</name>
    <name type="ordered locus">PA14_20950</name>
</gene>
<reference key="1">
    <citation type="journal article" date="2006" name="Genome Biol.">
        <title>Genomic analysis reveals that Pseudomonas aeruginosa virulence is combinatorial.</title>
        <authorList>
            <person name="Lee D.G."/>
            <person name="Urbach J.M."/>
            <person name="Wu G."/>
            <person name="Liberati N.T."/>
            <person name="Feinbaum R.L."/>
            <person name="Miyata S."/>
            <person name="Diggins L.T."/>
            <person name="He J."/>
            <person name="Saucier M."/>
            <person name="Deziel E."/>
            <person name="Friedman L."/>
            <person name="Li L."/>
            <person name="Grills G."/>
            <person name="Montgomery K."/>
            <person name="Kucherlapati R."/>
            <person name="Rahme L.G."/>
            <person name="Ausubel F.M."/>
        </authorList>
    </citation>
    <scope>NUCLEOTIDE SEQUENCE [LARGE SCALE GENOMIC DNA]</scope>
    <source>
        <strain>UCBPP-PA14</strain>
    </source>
</reference>
<sequence>MPRAAVVCGLGSYLPEAVLSNDMLAAELDTSDAWISSRTGVRQRHIAGDLGSGDLALRAASAALASAGLERVDAVVLATSTGDFCCPATAPRVAARLGLVGALAFDLSAACTGFVYGLASVGSLISAGLADSALLVGVDTFSHTLDPADRSTRALFGDGAGAVVLRAGDAEEEGALLAFDLGSDGHQFDLLMTPAVSRAERSSGQASNYFRMDGKAVFGQAVTQMSDSVRRVLDRVGWQASDLHHLVPHQANTRILAAVADQLDLPVERVVSNIAEVGNTVAASIPLALAHGLRQGILRDGGNMVLTGFGAGLTWGSVALRWPKIVPTMD</sequence>
<comment type="function">
    <text evidence="1">Catalyzes the condensation reaction of fatty acid synthesis by the addition to an acyl acceptor of two carbons from malonyl-ACP. Catalyzes the first condensation reaction which initiates fatty acid synthesis and may therefore play a role in governing the total rate of fatty acid production. Possesses both acetoacetyl-ACP synthase and acetyl transacylase activities. Its substrate specificity determines the biosynthesis of branched-chain and/or straight-chain of fatty acids.</text>
</comment>
<comment type="catalytic activity">
    <reaction evidence="1">
        <text>malonyl-[ACP] + acetyl-CoA + H(+) = 3-oxobutanoyl-[ACP] + CO2 + CoA</text>
        <dbReference type="Rhea" id="RHEA:12080"/>
        <dbReference type="Rhea" id="RHEA-COMP:9623"/>
        <dbReference type="Rhea" id="RHEA-COMP:9625"/>
        <dbReference type="ChEBI" id="CHEBI:15378"/>
        <dbReference type="ChEBI" id="CHEBI:16526"/>
        <dbReference type="ChEBI" id="CHEBI:57287"/>
        <dbReference type="ChEBI" id="CHEBI:57288"/>
        <dbReference type="ChEBI" id="CHEBI:78449"/>
        <dbReference type="ChEBI" id="CHEBI:78450"/>
        <dbReference type="EC" id="2.3.1.180"/>
    </reaction>
</comment>
<comment type="pathway">
    <text evidence="1">Lipid metabolism; fatty acid biosynthesis.</text>
</comment>
<comment type="subunit">
    <text evidence="1">Homodimer.</text>
</comment>
<comment type="subcellular location">
    <subcellularLocation>
        <location evidence="1">Cytoplasm</location>
    </subcellularLocation>
</comment>
<comment type="domain">
    <text evidence="1">The last Arg residue of the ACP-binding site is essential for the weak association between ACP/AcpP and FabH.</text>
</comment>
<comment type="similarity">
    <text evidence="1">Belongs to the thiolase-like superfamily. FabH family.</text>
</comment>
<evidence type="ECO:0000255" key="1">
    <source>
        <dbReference type="HAMAP-Rule" id="MF_01815"/>
    </source>
</evidence>
<feature type="chain" id="PRO_1000056393" description="Beta-ketoacyl-[acyl-carrier-protein] synthase III">
    <location>
        <begin position="1"/>
        <end position="330"/>
    </location>
</feature>
<feature type="region of interest" description="ACP-binding" evidence="1">
    <location>
        <begin position="250"/>
        <end position="254"/>
    </location>
</feature>
<feature type="active site" evidence="1">
    <location>
        <position position="111"/>
    </location>
</feature>
<feature type="active site" evidence="1">
    <location>
        <position position="249"/>
    </location>
</feature>
<feature type="active site" evidence="1">
    <location>
        <position position="279"/>
    </location>
</feature>
<protein>
    <recommendedName>
        <fullName evidence="1">Beta-ketoacyl-[acyl-carrier-protein] synthase III</fullName>
        <shortName evidence="1">Beta-ketoacyl-ACP synthase III</shortName>
        <shortName evidence="1">KAS III</shortName>
        <ecNumber evidence="1">2.3.1.180</ecNumber>
    </recommendedName>
    <alternativeName>
        <fullName evidence="1">3-oxoacyl-[acyl-carrier-protein] synthase 3</fullName>
    </alternativeName>
    <alternativeName>
        <fullName evidence="1">3-oxoacyl-[acyl-carrier-protein] synthase III</fullName>
    </alternativeName>
</protein>
<accession>Q02QG7</accession>